<feature type="chain" id="PRO_0000081169" description="DNA-binding transcriptional regulator NtrC">
    <location>
        <begin position="1"/>
        <end position="473"/>
    </location>
</feature>
<feature type="domain" description="Response regulatory" evidence="3">
    <location>
        <begin position="5"/>
        <end position="119"/>
    </location>
</feature>
<feature type="domain" description="Sigma-54 factor interaction" evidence="4">
    <location>
        <begin position="141"/>
        <end position="370"/>
    </location>
</feature>
<feature type="DNA-binding region" description="H-T-H motif" evidence="1">
    <location>
        <begin position="447"/>
        <end position="466"/>
    </location>
</feature>
<feature type="binding site" evidence="4">
    <location>
        <begin position="169"/>
        <end position="176"/>
    </location>
    <ligand>
        <name>ATP</name>
        <dbReference type="ChEBI" id="CHEBI:30616"/>
    </ligand>
</feature>
<feature type="binding site" evidence="4">
    <location>
        <begin position="232"/>
        <end position="241"/>
    </location>
    <ligand>
        <name>ATP</name>
        <dbReference type="ChEBI" id="CHEBI:30616"/>
    </ligand>
</feature>
<feature type="modified residue" description="4-aspartylphosphate" evidence="3">
    <location>
        <position position="54"/>
    </location>
</feature>
<proteinExistence type="inferred from homology"/>
<comment type="function">
    <text evidence="2">Member of the two-component regulatory system NtrB/NtrC, which controls expression of the nitrogen-regulated (ntr) genes in response to nitrogen limitation. Phosphorylated NtrC binds directly to DNA and stimulates the formation of open promoter-sigma54-RNA polymerase complexes.</text>
</comment>
<comment type="subcellular location">
    <subcellularLocation>
        <location evidence="2">Cytoplasm</location>
    </subcellularLocation>
</comment>
<comment type="PTM">
    <text evidence="2">Phosphorylated and dephosphorylated by NtrB.</text>
</comment>
<evidence type="ECO:0000250" key="1"/>
<evidence type="ECO:0000250" key="2">
    <source>
        <dbReference type="UniProtKB" id="P0AFB8"/>
    </source>
</evidence>
<evidence type="ECO:0000255" key="3">
    <source>
        <dbReference type="PROSITE-ProRule" id="PRU00169"/>
    </source>
</evidence>
<evidence type="ECO:0000255" key="4">
    <source>
        <dbReference type="PROSITE-ProRule" id="PRU00193"/>
    </source>
</evidence>
<sequence>MQKGNVWVVDDDSSIRWVLERAITREGMLCRAFEHANDVLKALNSEQPDVLLSDIRMPDMDGLSLLKIIKEQYPTLPVIIMTAHSDLDAAVNAYQQGAFDYLPKPFDIDETLALIERAITHYREQKQPNNAENILQSVSDMIGEAPAMQEVYRIIGRLSRSSISVLINGESGTGKELVAHALHRHSPRALAPFIALNMAAIPKDLIESELFGHEKGAFTGASQVRQGRFEQANGGSLFLDEIGDMPLDIQTRLLRVLAEGQFYRVGGYAPVKVDVRIIAATHQDLEKRVNEGDFREDLYHRLNVIRIQLPPLRDRTEDIPSLARYFLQKTAKELGVETKSLHEQSLKTMMEYVWSGNVRQLENVCRWLTVMTASQEIMPQDLPSEIRLADEKAKNINRLTSQHWSQHLSLWADEALGEGKENILNDALPQFERTLLLSALAYTQGHKQDAARLLGWGRNTLTRKLKELGIEDY</sequence>
<protein>
    <recommendedName>
        <fullName evidence="2">DNA-binding transcriptional regulator NtrC</fullName>
    </recommendedName>
    <alternativeName>
        <fullName evidence="2">Nitrogen regulation protein NR(I)</fullName>
    </alternativeName>
    <alternativeName>
        <fullName evidence="2">Nitrogen regulator I</fullName>
        <shortName evidence="2">NRI</shortName>
    </alternativeName>
</protein>
<dbReference type="EMBL" id="X68129">
    <property type="protein sequence ID" value="CAA48236.1"/>
    <property type="molecule type" value="Genomic_DNA"/>
</dbReference>
<dbReference type="PIR" id="S23901">
    <property type="entry name" value="S23901"/>
</dbReference>
<dbReference type="SMR" id="P28787"/>
<dbReference type="STRING" id="1354271.M997_0112"/>
<dbReference type="OrthoDB" id="9804019at2"/>
<dbReference type="GO" id="GO:0005737">
    <property type="term" value="C:cytoplasm"/>
    <property type="evidence" value="ECO:0007669"/>
    <property type="project" value="UniProtKB-SubCell"/>
</dbReference>
<dbReference type="GO" id="GO:0005524">
    <property type="term" value="F:ATP binding"/>
    <property type="evidence" value="ECO:0007669"/>
    <property type="project" value="UniProtKB-KW"/>
</dbReference>
<dbReference type="GO" id="GO:0016887">
    <property type="term" value="F:ATP hydrolysis activity"/>
    <property type="evidence" value="ECO:0007669"/>
    <property type="project" value="InterPro"/>
</dbReference>
<dbReference type="GO" id="GO:0000156">
    <property type="term" value="F:phosphorelay response regulator activity"/>
    <property type="evidence" value="ECO:0007669"/>
    <property type="project" value="InterPro"/>
</dbReference>
<dbReference type="GO" id="GO:0043565">
    <property type="term" value="F:sequence-specific DNA binding"/>
    <property type="evidence" value="ECO:0007669"/>
    <property type="project" value="InterPro"/>
</dbReference>
<dbReference type="GO" id="GO:0009399">
    <property type="term" value="P:nitrogen fixation"/>
    <property type="evidence" value="ECO:0007669"/>
    <property type="project" value="UniProtKB-KW"/>
</dbReference>
<dbReference type="GO" id="GO:0006355">
    <property type="term" value="P:regulation of DNA-templated transcription"/>
    <property type="evidence" value="ECO:0007669"/>
    <property type="project" value="InterPro"/>
</dbReference>
<dbReference type="GO" id="GO:0006808">
    <property type="term" value="P:regulation of nitrogen utilization"/>
    <property type="evidence" value="ECO:0007669"/>
    <property type="project" value="InterPro"/>
</dbReference>
<dbReference type="CDD" id="cd00009">
    <property type="entry name" value="AAA"/>
    <property type="match status" value="1"/>
</dbReference>
<dbReference type="CDD" id="cd19919">
    <property type="entry name" value="REC_NtrC"/>
    <property type="match status" value="1"/>
</dbReference>
<dbReference type="FunFam" id="1.10.10.60:FF:000088">
    <property type="entry name" value="DNA-binding transcriptional regulator NtrC"/>
    <property type="match status" value="1"/>
</dbReference>
<dbReference type="FunFam" id="1.10.8.60:FF:000014">
    <property type="entry name" value="DNA-binding transcriptional regulator NtrC"/>
    <property type="match status" value="1"/>
</dbReference>
<dbReference type="FunFam" id="3.40.50.2300:FF:000018">
    <property type="entry name" value="DNA-binding transcriptional regulator NtrC"/>
    <property type="match status" value="1"/>
</dbReference>
<dbReference type="FunFam" id="3.40.50.300:FF:000006">
    <property type="entry name" value="DNA-binding transcriptional regulator NtrC"/>
    <property type="match status" value="1"/>
</dbReference>
<dbReference type="Gene3D" id="1.10.8.60">
    <property type="match status" value="1"/>
</dbReference>
<dbReference type="Gene3D" id="3.40.50.2300">
    <property type="match status" value="1"/>
</dbReference>
<dbReference type="Gene3D" id="1.10.10.60">
    <property type="entry name" value="Homeodomain-like"/>
    <property type="match status" value="1"/>
</dbReference>
<dbReference type="Gene3D" id="3.40.50.300">
    <property type="entry name" value="P-loop containing nucleotide triphosphate hydrolases"/>
    <property type="match status" value="1"/>
</dbReference>
<dbReference type="InterPro" id="IPR003593">
    <property type="entry name" value="AAA+_ATPase"/>
</dbReference>
<dbReference type="InterPro" id="IPR011006">
    <property type="entry name" value="CheY-like_superfamily"/>
</dbReference>
<dbReference type="InterPro" id="IPR009057">
    <property type="entry name" value="Homeodomain-like_sf"/>
</dbReference>
<dbReference type="InterPro" id="IPR002197">
    <property type="entry name" value="HTH_Fis"/>
</dbReference>
<dbReference type="InterPro" id="IPR027417">
    <property type="entry name" value="P-loop_NTPase"/>
</dbReference>
<dbReference type="InterPro" id="IPR001789">
    <property type="entry name" value="Sig_transdc_resp-reg_receiver"/>
</dbReference>
<dbReference type="InterPro" id="IPR002078">
    <property type="entry name" value="Sigma_54_int"/>
</dbReference>
<dbReference type="InterPro" id="IPR025662">
    <property type="entry name" value="Sigma_54_int_dom_ATP-bd_1"/>
</dbReference>
<dbReference type="InterPro" id="IPR025943">
    <property type="entry name" value="Sigma_54_int_dom_ATP-bd_2"/>
</dbReference>
<dbReference type="InterPro" id="IPR010114">
    <property type="entry name" value="Transcript_reg_NtrC"/>
</dbReference>
<dbReference type="NCBIfam" id="TIGR01818">
    <property type="entry name" value="ntrC"/>
    <property type="match status" value="1"/>
</dbReference>
<dbReference type="NCBIfam" id="NF008176">
    <property type="entry name" value="PRK10923.1"/>
    <property type="match status" value="1"/>
</dbReference>
<dbReference type="PANTHER" id="PTHR32071:SF95">
    <property type="entry name" value="DNA-BINDING TRANSCRIPTIONAL REGULATOR NTRC"/>
    <property type="match status" value="1"/>
</dbReference>
<dbReference type="PANTHER" id="PTHR32071">
    <property type="entry name" value="TRANSCRIPTIONAL REGULATORY PROTEIN"/>
    <property type="match status" value="1"/>
</dbReference>
<dbReference type="Pfam" id="PF02954">
    <property type="entry name" value="HTH_8"/>
    <property type="match status" value="1"/>
</dbReference>
<dbReference type="Pfam" id="PF00072">
    <property type="entry name" value="Response_reg"/>
    <property type="match status" value="1"/>
</dbReference>
<dbReference type="Pfam" id="PF00158">
    <property type="entry name" value="Sigma54_activat"/>
    <property type="match status" value="1"/>
</dbReference>
<dbReference type="PRINTS" id="PR01590">
    <property type="entry name" value="HTHFIS"/>
</dbReference>
<dbReference type="SMART" id="SM00382">
    <property type="entry name" value="AAA"/>
    <property type="match status" value="1"/>
</dbReference>
<dbReference type="SMART" id="SM00448">
    <property type="entry name" value="REC"/>
    <property type="match status" value="1"/>
</dbReference>
<dbReference type="SUPFAM" id="SSF52172">
    <property type="entry name" value="CheY-like"/>
    <property type="match status" value="1"/>
</dbReference>
<dbReference type="SUPFAM" id="SSF46689">
    <property type="entry name" value="Homeodomain-like"/>
    <property type="match status" value="1"/>
</dbReference>
<dbReference type="SUPFAM" id="SSF52540">
    <property type="entry name" value="P-loop containing nucleoside triphosphate hydrolases"/>
    <property type="match status" value="1"/>
</dbReference>
<dbReference type="PROSITE" id="PS50110">
    <property type="entry name" value="RESPONSE_REGULATORY"/>
    <property type="match status" value="1"/>
</dbReference>
<dbReference type="PROSITE" id="PS00675">
    <property type="entry name" value="SIGMA54_INTERACT_1"/>
    <property type="match status" value="1"/>
</dbReference>
<dbReference type="PROSITE" id="PS00676">
    <property type="entry name" value="SIGMA54_INTERACT_2"/>
    <property type="match status" value="1"/>
</dbReference>
<dbReference type="PROSITE" id="PS50045">
    <property type="entry name" value="SIGMA54_INTERACT_4"/>
    <property type="match status" value="1"/>
</dbReference>
<gene>
    <name type="primary">ntrC</name>
</gene>
<name>NTRC_PROHU</name>
<accession>P28787</accession>
<keyword id="KW-0010">Activator</keyword>
<keyword id="KW-0067">ATP-binding</keyword>
<keyword id="KW-0963">Cytoplasm</keyword>
<keyword id="KW-0238">DNA-binding</keyword>
<keyword id="KW-0535">Nitrogen fixation</keyword>
<keyword id="KW-0547">Nucleotide-binding</keyword>
<keyword id="KW-0597">Phosphoprotein</keyword>
<keyword id="KW-0678">Repressor</keyword>
<keyword id="KW-0804">Transcription</keyword>
<keyword id="KW-0805">Transcription regulation</keyword>
<keyword id="KW-0902">Two-component regulatory system</keyword>
<organism>
    <name type="scientific">Proteus hauseri</name>
    <dbReference type="NCBI Taxonomy" id="183417"/>
    <lineage>
        <taxon>Bacteria</taxon>
        <taxon>Pseudomonadati</taxon>
        <taxon>Pseudomonadota</taxon>
        <taxon>Gammaproteobacteria</taxon>
        <taxon>Enterobacterales</taxon>
        <taxon>Morganellaceae</taxon>
        <taxon>Proteus</taxon>
    </lineage>
</organism>
<reference key="1">
    <citation type="journal article" date="1993" name="FEMS Microbiol. Lett.">
        <title>Cloning, heterologous expression, and sequencing of the Proteus vulgaris glnAntrBC operon and implications of nitrogen control on heterologous urease expression.</title>
        <authorList>
            <person name="Steglitz-Moersdorf U."/>
            <person name="Moersdorf G."/>
            <person name="Kaltwasser H."/>
        </authorList>
    </citation>
    <scope>NUCLEOTIDE SEQUENCE [GENOMIC DNA]</scope>
    <source>
        <strain>ATCC 13315 / DSM 30118 / JCM 1668 / NBRC 3851 / NCIMB 4175 / NCTC 4175 / NRRL B-3405</strain>
    </source>
</reference>